<dbReference type="EC" id="3.6.-.-" evidence="1"/>
<dbReference type="EMBL" id="CP000382">
    <property type="protein sequence ID" value="ABK61748.1"/>
    <property type="molecule type" value="Genomic_DNA"/>
</dbReference>
<dbReference type="RefSeq" id="WP_011721000.1">
    <property type="nucleotide sequence ID" value="NC_008593.1"/>
</dbReference>
<dbReference type="SMR" id="A0PX77"/>
<dbReference type="STRING" id="386415.NT01CX_0873"/>
<dbReference type="KEGG" id="cno:NT01CX_0873"/>
<dbReference type="eggNOG" id="COG0486">
    <property type="taxonomic scope" value="Bacteria"/>
</dbReference>
<dbReference type="HOGENOM" id="CLU_019624_4_1_9"/>
<dbReference type="Proteomes" id="UP000008220">
    <property type="component" value="Chromosome"/>
</dbReference>
<dbReference type="GO" id="GO:0005829">
    <property type="term" value="C:cytosol"/>
    <property type="evidence" value="ECO:0007669"/>
    <property type="project" value="TreeGrafter"/>
</dbReference>
<dbReference type="GO" id="GO:0005525">
    <property type="term" value="F:GTP binding"/>
    <property type="evidence" value="ECO:0007669"/>
    <property type="project" value="UniProtKB-UniRule"/>
</dbReference>
<dbReference type="GO" id="GO:0003924">
    <property type="term" value="F:GTPase activity"/>
    <property type="evidence" value="ECO:0007669"/>
    <property type="project" value="UniProtKB-UniRule"/>
</dbReference>
<dbReference type="GO" id="GO:0046872">
    <property type="term" value="F:metal ion binding"/>
    <property type="evidence" value="ECO:0007669"/>
    <property type="project" value="UniProtKB-KW"/>
</dbReference>
<dbReference type="GO" id="GO:0030488">
    <property type="term" value="P:tRNA methylation"/>
    <property type="evidence" value="ECO:0007669"/>
    <property type="project" value="TreeGrafter"/>
</dbReference>
<dbReference type="GO" id="GO:0002098">
    <property type="term" value="P:tRNA wobble uridine modification"/>
    <property type="evidence" value="ECO:0007669"/>
    <property type="project" value="TreeGrafter"/>
</dbReference>
<dbReference type="CDD" id="cd04164">
    <property type="entry name" value="trmE"/>
    <property type="match status" value="1"/>
</dbReference>
<dbReference type="CDD" id="cd14858">
    <property type="entry name" value="TrmE_N"/>
    <property type="match status" value="1"/>
</dbReference>
<dbReference type="FunFam" id="3.30.1360.120:FF:000003">
    <property type="entry name" value="tRNA modification GTPase MnmE"/>
    <property type="match status" value="1"/>
</dbReference>
<dbReference type="FunFam" id="3.40.50.300:FF:000494">
    <property type="entry name" value="tRNA modification GTPase MnmE"/>
    <property type="match status" value="1"/>
</dbReference>
<dbReference type="Gene3D" id="3.40.50.300">
    <property type="entry name" value="P-loop containing nucleotide triphosphate hydrolases"/>
    <property type="match status" value="1"/>
</dbReference>
<dbReference type="Gene3D" id="3.30.1360.120">
    <property type="entry name" value="Probable tRNA modification gtpase trme, domain 1"/>
    <property type="match status" value="1"/>
</dbReference>
<dbReference type="Gene3D" id="1.20.120.430">
    <property type="entry name" value="tRNA modification GTPase MnmE domain 2"/>
    <property type="match status" value="1"/>
</dbReference>
<dbReference type="HAMAP" id="MF_00379">
    <property type="entry name" value="GTPase_MnmE"/>
    <property type="match status" value="1"/>
</dbReference>
<dbReference type="InterPro" id="IPR031168">
    <property type="entry name" value="G_TrmE"/>
</dbReference>
<dbReference type="InterPro" id="IPR006073">
    <property type="entry name" value="GTP-bd"/>
</dbReference>
<dbReference type="InterPro" id="IPR018948">
    <property type="entry name" value="GTP-bd_TrmE_N"/>
</dbReference>
<dbReference type="InterPro" id="IPR004520">
    <property type="entry name" value="GTPase_MnmE"/>
</dbReference>
<dbReference type="InterPro" id="IPR027368">
    <property type="entry name" value="MnmE_dom2"/>
</dbReference>
<dbReference type="InterPro" id="IPR025867">
    <property type="entry name" value="MnmE_helical"/>
</dbReference>
<dbReference type="InterPro" id="IPR027417">
    <property type="entry name" value="P-loop_NTPase"/>
</dbReference>
<dbReference type="InterPro" id="IPR005225">
    <property type="entry name" value="Small_GTP-bd"/>
</dbReference>
<dbReference type="InterPro" id="IPR027266">
    <property type="entry name" value="TrmE/GcvT_dom1"/>
</dbReference>
<dbReference type="NCBIfam" id="TIGR00450">
    <property type="entry name" value="mnmE_trmE_thdF"/>
    <property type="match status" value="1"/>
</dbReference>
<dbReference type="NCBIfam" id="NF003661">
    <property type="entry name" value="PRK05291.1-3"/>
    <property type="match status" value="1"/>
</dbReference>
<dbReference type="NCBIfam" id="TIGR00231">
    <property type="entry name" value="small_GTP"/>
    <property type="match status" value="1"/>
</dbReference>
<dbReference type="PANTHER" id="PTHR42714">
    <property type="entry name" value="TRNA MODIFICATION GTPASE GTPBP3"/>
    <property type="match status" value="1"/>
</dbReference>
<dbReference type="PANTHER" id="PTHR42714:SF2">
    <property type="entry name" value="TRNA MODIFICATION GTPASE GTPBP3, MITOCHONDRIAL"/>
    <property type="match status" value="1"/>
</dbReference>
<dbReference type="Pfam" id="PF01926">
    <property type="entry name" value="MMR_HSR1"/>
    <property type="match status" value="1"/>
</dbReference>
<dbReference type="Pfam" id="PF12631">
    <property type="entry name" value="MnmE_helical"/>
    <property type="match status" value="1"/>
</dbReference>
<dbReference type="Pfam" id="PF10396">
    <property type="entry name" value="TrmE_N"/>
    <property type="match status" value="1"/>
</dbReference>
<dbReference type="SUPFAM" id="SSF52540">
    <property type="entry name" value="P-loop containing nucleoside triphosphate hydrolases"/>
    <property type="match status" value="1"/>
</dbReference>
<dbReference type="SUPFAM" id="SSF116878">
    <property type="entry name" value="TrmE connector domain"/>
    <property type="match status" value="1"/>
</dbReference>
<dbReference type="PROSITE" id="PS51709">
    <property type="entry name" value="G_TRME"/>
    <property type="match status" value="1"/>
</dbReference>
<sequence length="459" mass="50695">MKEFDTIAAIATNLGESGVSIIRVSGDKALSIVSSIFTGKNDRKLDDIRTYSMRYGFIIDKDTKEKLDEVIVSYMKGPRSFTAEDVVEINCHGGVVVTKRILEEVVAAGARLASPGEFTKRAFLNGRIDLSQAEAVIDLINAKTELSAKSALEQSEGKLSREIGKIRNKLLEIIASIEATVDYPEDDLEEVTSEKGRESVSKLLDEIDSLLDHADEGKILREGLNTVIVGKPNVGKSSLLNALLMETRAIVTDVPGTTRDVIEEYMSIDGIPIKIIDTAGIRDTDDVVEKIGVEKSREKINNSDLTVLVLDNSRGLDDEDKEIINFIKDKKYIVLLNKMDLESKIDKEALKELNSKYIIEISAKTGSGLDKFKEVIKELFFSGKVASKDVMITNTRHKEALIRAKESLEASKNALDNTFAIDLASIDLRNAWKSLGEINGDTVEEDIIDKIFSKFCLGK</sequence>
<feature type="chain" id="PRO_1000048820" description="tRNA modification GTPase MnmE">
    <location>
        <begin position="1"/>
        <end position="459"/>
    </location>
</feature>
<feature type="domain" description="TrmE-type G">
    <location>
        <begin position="223"/>
        <end position="381"/>
    </location>
</feature>
<feature type="binding site" evidence="1">
    <location>
        <position position="23"/>
    </location>
    <ligand>
        <name>(6S)-5-formyl-5,6,7,8-tetrahydrofolate</name>
        <dbReference type="ChEBI" id="CHEBI:57457"/>
    </ligand>
</feature>
<feature type="binding site" evidence="1">
    <location>
        <position position="88"/>
    </location>
    <ligand>
        <name>(6S)-5-formyl-5,6,7,8-tetrahydrofolate</name>
        <dbReference type="ChEBI" id="CHEBI:57457"/>
    </ligand>
</feature>
<feature type="binding site" evidence="1">
    <location>
        <position position="127"/>
    </location>
    <ligand>
        <name>(6S)-5-formyl-5,6,7,8-tetrahydrofolate</name>
        <dbReference type="ChEBI" id="CHEBI:57457"/>
    </ligand>
</feature>
<feature type="binding site" evidence="1">
    <location>
        <begin position="233"/>
        <end position="238"/>
    </location>
    <ligand>
        <name>GTP</name>
        <dbReference type="ChEBI" id="CHEBI:37565"/>
    </ligand>
</feature>
<feature type="binding site" evidence="1">
    <location>
        <position position="233"/>
    </location>
    <ligand>
        <name>K(+)</name>
        <dbReference type="ChEBI" id="CHEBI:29103"/>
    </ligand>
</feature>
<feature type="binding site" evidence="1">
    <location>
        <position position="237"/>
    </location>
    <ligand>
        <name>Mg(2+)</name>
        <dbReference type="ChEBI" id="CHEBI:18420"/>
    </ligand>
</feature>
<feature type="binding site" evidence="1">
    <location>
        <begin position="252"/>
        <end position="258"/>
    </location>
    <ligand>
        <name>GTP</name>
        <dbReference type="ChEBI" id="CHEBI:37565"/>
    </ligand>
</feature>
<feature type="binding site" evidence="1">
    <location>
        <position position="252"/>
    </location>
    <ligand>
        <name>K(+)</name>
        <dbReference type="ChEBI" id="CHEBI:29103"/>
    </ligand>
</feature>
<feature type="binding site" evidence="1">
    <location>
        <position position="254"/>
    </location>
    <ligand>
        <name>K(+)</name>
        <dbReference type="ChEBI" id="CHEBI:29103"/>
    </ligand>
</feature>
<feature type="binding site" evidence="1">
    <location>
        <position position="257"/>
    </location>
    <ligand>
        <name>K(+)</name>
        <dbReference type="ChEBI" id="CHEBI:29103"/>
    </ligand>
</feature>
<feature type="binding site" evidence="1">
    <location>
        <position position="258"/>
    </location>
    <ligand>
        <name>Mg(2+)</name>
        <dbReference type="ChEBI" id="CHEBI:18420"/>
    </ligand>
</feature>
<feature type="binding site" evidence="1">
    <location>
        <begin position="277"/>
        <end position="280"/>
    </location>
    <ligand>
        <name>GTP</name>
        <dbReference type="ChEBI" id="CHEBI:37565"/>
    </ligand>
</feature>
<feature type="binding site" evidence="1">
    <location>
        <position position="459"/>
    </location>
    <ligand>
        <name>(6S)-5-formyl-5,6,7,8-tetrahydrofolate</name>
        <dbReference type="ChEBI" id="CHEBI:57457"/>
    </ligand>
</feature>
<reference key="1">
    <citation type="journal article" date="2006" name="Nat. Biotechnol.">
        <title>The genome and transcriptomes of the anti-tumor agent Clostridium novyi-NT.</title>
        <authorList>
            <person name="Bettegowda C."/>
            <person name="Huang X."/>
            <person name="Lin J."/>
            <person name="Cheong I."/>
            <person name="Kohli M."/>
            <person name="Szabo S.A."/>
            <person name="Zhang X."/>
            <person name="Diaz L.A. Jr."/>
            <person name="Velculescu V.E."/>
            <person name="Parmigiani G."/>
            <person name="Kinzler K.W."/>
            <person name="Vogelstein B."/>
            <person name="Zhou S."/>
        </authorList>
    </citation>
    <scope>NUCLEOTIDE SEQUENCE [LARGE SCALE GENOMIC DNA]</scope>
    <source>
        <strain>NT</strain>
    </source>
</reference>
<proteinExistence type="inferred from homology"/>
<gene>
    <name evidence="1" type="primary">mnmE</name>
    <name evidence="1" type="synonym">trmE</name>
    <name type="ordered locus">NT01CX_0873</name>
</gene>
<organism>
    <name type="scientific">Clostridium novyi (strain NT)</name>
    <dbReference type="NCBI Taxonomy" id="386415"/>
    <lineage>
        <taxon>Bacteria</taxon>
        <taxon>Bacillati</taxon>
        <taxon>Bacillota</taxon>
        <taxon>Clostridia</taxon>
        <taxon>Eubacteriales</taxon>
        <taxon>Clostridiaceae</taxon>
        <taxon>Clostridium</taxon>
    </lineage>
</organism>
<name>MNME_CLONN</name>
<protein>
    <recommendedName>
        <fullName evidence="1">tRNA modification GTPase MnmE</fullName>
        <ecNumber evidence="1">3.6.-.-</ecNumber>
    </recommendedName>
</protein>
<accession>A0PX77</accession>
<keyword id="KW-0963">Cytoplasm</keyword>
<keyword id="KW-0342">GTP-binding</keyword>
<keyword id="KW-0378">Hydrolase</keyword>
<keyword id="KW-0460">Magnesium</keyword>
<keyword id="KW-0479">Metal-binding</keyword>
<keyword id="KW-0547">Nucleotide-binding</keyword>
<keyword id="KW-0630">Potassium</keyword>
<keyword id="KW-1185">Reference proteome</keyword>
<keyword id="KW-0819">tRNA processing</keyword>
<comment type="function">
    <text evidence="1">Exhibits a very high intrinsic GTPase hydrolysis rate. Involved in the addition of a carboxymethylaminomethyl (cmnm) group at the wobble position (U34) of certain tRNAs, forming tRNA-cmnm(5)s(2)U34.</text>
</comment>
<comment type="cofactor">
    <cofactor evidence="1">
        <name>K(+)</name>
        <dbReference type="ChEBI" id="CHEBI:29103"/>
    </cofactor>
    <text evidence="1">Binds 1 potassium ion per subunit.</text>
</comment>
<comment type="subunit">
    <text evidence="1">Homodimer. Heterotetramer of two MnmE and two MnmG subunits.</text>
</comment>
<comment type="subcellular location">
    <subcellularLocation>
        <location evidence="1">Cytoplasm</location>
    </subcellularLocation>
</comment>
<comment type="similarity">
    <text evidence="1">Belongs to the TRAFAC class TrmE-Era-EngA-EngB-Septin-like GTPase superfamily. TrmE GTPase family.</text>
</comment>
<evidence type="ECO:0000255" key="1">
    <source>
        <dbReference type="HAMAP-Rule" id="MF_00379"/>
    </source>
</evidence>